<feature type="chain" id="PRO_0000053113" description="Hemoglobin subunit beta-1">
    <location>
        <begin position="1"/>
        <end position="146"/>
    </location>
</feature>
<feature type="domain" description="Globin" evidence="1">
    <location>
        <begin position="2"/>
        <end position="146"/>
    </location>
</feature>
<feature type="binding site" description="distal binding residue">
    <location>
        <position position="63"/>
    </location>
    <ligand>
        <name>heme b</name>
        <dbReference type="ChEBI" id="CHEBI:60344"/>
    </ligand>
    <ligandPart>
        <name>Fe</name>
        <dbReference type="ChEBI" id="CHEBI:18248"/>
    </ligandPart>
</feature>
<feature type="binding site" description="proximal binding residue">
    <location>
        <position position="92"/>
    </location>
    <ligand>
        <name>heme b</name>
        <dbReference type="ChEBI" id="CHEBI:60344"/>
    </ligand>
    <ligandPart>
        <name>Fe</name>
        <dbReference type="ChEBI" id="CHEBI:18248"/>
    </ligandPart>
</feature>
<reference key="1">
    <citation type="journal article" date="1988" name="Biol. Chem. Hoppe-Seyler">
        <title>Primary structure of the hemoglobins from Sphenodon (Sphenodon punctatus, Tuatara, Rynchocephalia). Evidence for the expression of alpha D-gene.</title>
        <authorList>
            <person name="Abbasi A."/>
            <person name="Wells R.M.G."/>
            <person name="Brittain T."/>
            <person name="Braunitzer G."/>
        </authorList>
    </citation>
    <scope>PROTEIN SEQUENCE</scope>
</reference>
<name>HBB1_SPHPU</name>
<comment type="function">
    <text>Involved in oxygen transport from the lung to the various peripheral tissues.</text>
</comment>
<comment type="subunit">
    <text>There are three forms of hemoglobin in Sphenodon: A, A' and D. Hb A is a tetramer of two alpha-A and two beta-1, Hb A' is a tetramer of two alpha-a and two beta-2, Hb D is a tetramer of two alpha-D and two beta-2.</text>
</comment>
<comment type="miscellaneous">
    <text>Sphenodon Hbs have properties not found in other reptiles: poor cooperativity, high affinity for oxygen, small Bohr and haldane effects, appreciable phosphate effects (those properties are also found in the Hbs of primitive urodele and caecilian amphibians).</text>
</comment>
<comment type="similarity">
    <text evidence="1">Belongs to the globin family.</text>
</comment>
<sequence>VHWTAEEKHLLGSLWAKVDVADIGGEALGRLLVVYPWTQRFFADFGNLSSATAICGNPRVKAHGKKVFTMFGEALKHLDNLKETFASLSELHCDKLHVDTENFKLLGNLVIVVLAARLHDSFTPAAQAAFHKLAYSVAHALARRYH</sequence>
<protein>
    <recommendedName>
        <fullName>Hemoglobin subunit beta-1</fullName>
    </recommendedName>
    <alternativeName>
        <fullName>Beta-1-globin</fullName>
    </alternativeName>
    <alternativeName>
        <fullName>Hemoglobin beta-1 chain</fullName>
    </alternativeName>
</protein>
<evidence type="ECO:0000255" key="1">
    <source>
        <dbReference type="PROSITE-ProRule" id="PRU00238"/>
    </source>
</evidence>
<organism>
    <name type="scientific">Sphenodon punctatus</name>
    <name type="common">Tuatara</name>
    <name type="synonym">Hatteria punctata</name>
    <dbReference type="NCBI Taxonomy" id="8508"/>
    <lineage>
        <taxon>Eukaryota</taxon>
        <taxon>Metazoa</taxon>
        <taxon>Chordata</taxon>
        <taxon>Craniata</taxon>
        <taxon>Vertebrata</taxon>
        <taxon>Euteleostomi</taxon>
        <taxon>Lepidosauria</taxon>
        <taxon>Sphenodontia</taxon>
        <taxon>Sphenodontidae</taxon>
        <taxon>Sphenodon</taxon>
    </lineage>
</organism>
<accession>P10060</accession>
<gene>
    <name type="primary">HBB1</name>
</gene>
<proteinExistence type="evidence at protein level"/>
<dbReference type="PIR" id="S01138">
    <property type="entry name" value="HBTJ1"/>
</dbReference>
<dbReference type="SMR" id="P10060"/>
<dbReference type="Proteomes" id="UP000694392">
    <property type="component" value="Unplaced"/>
</dbReference>
<dbReference type="GO" id="GO:0072562">
    <property type="term" value="C:blood microparticle"/>
    <property type="evidence" value="ECO:0007669"/>
    <property type="project" value="TreeGrafter"/>
</dbReference>
<dbReference type="GO" id="GO:0031838">
    <property type="term" value="C:haptoglobin-hemoglobin complex"/>
    <property type="evidence" value="ECO:0007669"/>
    <property type="project" value="TreeGrafter"/>
</dbReference>
<dbReference type="GO" id="GO:0005833">
    <property type="term" value="C:hemoglobin complex"/>
    <property type="evidence" value="ECO:0007669"/>
    <property type="project" value="InterPro"/>
</dbReference>
<dbReference type="GO" id="GO:0031720">
    <property type="term" value="F:haptoglobin binding"/>
    <property type="evidence" value="ECO:0007669"/>
    <property type="project" value="TreeGrafter"/>
</dbReference>
<dbReference type="GO" id="GO:0020037">
    <property type="term" value="F:heme binding"/>
    <property type="evidence" value="ECO:0007669"/>
    <property type="project" value="InterPro"/>
</dbReference>
<dbReference type="GO" id="GO:0046872">
    <property type="term" value="F:metal ion binding"/>
    <property type="evidence" value="ECO:0007669"/>
    <property type="project" value="UniProtKB-KW"/>
</dbReference>
<dbReference type="GO" id="GO:0043177">
    <property type="term" value="F:organic acid binding"/>
    <property type="evidence" value="ECO:0007669"/>
    <property type="project" value="TreeGrafter"/>
</dbReference>
<dbReference type="GO" id="GO:0019825">
    <property type="term" value="F:oxygen binding"/>
    <property type="evidence" value="ECO:0007669"/>
    <property type="project" value="InterPro"/>
</dbReference>
<dbReference type="GO" id="GO:0005344">
    <property type="term" value="F:oxygen carrier activity"/>
    <property type="evidence" value="ECO:0007669"/>
    <property type="project" value="UniProtKB-KW"/>
</dbReference>
<dbReference type="GO" id="GO:0004601">
    <property type="term" value="F:peroxidase activity"/>
    <property type="evidence" value="ECO:0007669"/>
    <property type="project" value="TreeGrafter"/>
</dbReference>
<dbReference type="GO" id="GO:0042744">
    <property type="term" value="P:hydrogen peroxide catabolic process"/>
    <property type="evidence" value="ECO:0007669"/>
    <property type="project" value="TreeGrafter"/>
</dbReference>
<dbReference type="CDD" id="cd08925">
    <property type="entry name" value="Hb-beta-like"/>
    <property type="match status" value="1"/>
</dbReference>
<dbReference type="FunFam" id="1.10.490.10:FF:000001">
    <property type="entry name" value="Hemoglobin subunit beta"/>
    <property type="match status" value="1"/>
</dbReference>
<dbReference type="Gene3D" id="1.10.490.10">
    <property type="entry name" value="Globins"/>
    <property type="match status" value="1"/>
</dbReference>
<dbReference type="InterPro" id="IPR000971">
    <property type="entry name" value="Globin"/>
</dbReference>
<dbReference type="InterPro" id="IPR009050">
    <property type="entry name" value="Globin-like_sf"/>
</dbReference>
<dbReference type="InterPro" id="IPR012292">
    <property type="entry name" value="Globin/Proto"/>
</dbReference>
<dbReference type="InterPro" id="IPR002337">
    <property type="entry name" value="Hemoglobin_b"/>
</dbReference>
<dbReference type="InterPro" id="IPR050056">
    <property type="entry name" value="Hemoglobin_oxygen_transport"/>
</dbReference>
<dbReference type="PANTHER" id="PTHR11442">
    <property type="entry name" value="HEMOGLOBIN FAMILY MEMBER"/>
    <property type="match status" value="1"/>
</dbReference>
<dbReference type="PANTHER" id="PTHR11442:SF7">
    <property type="entry name" value="HEMOGLOBIN SUBUNIT EPSILON"/>
    <property type="match status" value="1"/>
</dbReference>
<dbReference type="Pfam" id="PF00042">
    <property type="entry name" value="Globin"/>
    <property type="match status" value="1"/>
</dbReference>
<dbReference type="PRINTS" id="PR00814">
    <property type="entry name" value="BETAHAEM"/>
</dbReference>
<dbReference type="SUPFAM" id="SSF46458">
    <property type="entry name" value="Globin-like"/>
    <property type="match status" value="1"/>
</dbReference>
<dbReference type="PROSITE" id="PS01033">
    <property type="entry name" value="GLOBIN"/>
    <property type="match status" value="1"/>
</dbReference>
<keyword id="KW-0903">Direct protein sequencing</keyword>
<keyword id="KW-0349">Heme</keyword>
<keyword id="KW-0408">Iron</keyword>
<keyword id="KW-0479">Metal-binding</keyword>
<keyword id="KW-0561">Oxygen transport</keyword>
<keyword id="KW-1185">Reference proteome</keyword>
<keyword id="KW-0813">Transport</keyword>